<gene>
    <name type="primary">CACYBP</name>
    <name type="ORF">QtrA-13480</name>
</gene>
<comment type="function">
    <text evidence="1">May be involved in calcium-dependent ubiquitination and subsequent proteasomal degradation of target proteins. Probably serves as a molecular bridge in ubiquitin E3 complexes. Participates in the ubiquitin-mediated degradation of beta-catenin (CTNNB1) (By similarity).</text>
</comment>
<comment type="subunit">
    <text evidence="1">Component of some large E3 complex at least composed of UBE2D1, SIAH1, CACYBP/SIP, SKP1, APC and TBL1X. Interacts directly with SIAH1, SIAH2 and SKP1 (By similarity). Interacts with protein of the S100 family S100A1, S100A6, S100B, S100P and S100A12 in a calcium-dependent manner (By similarity).</text>
</comment>
<comment type="subcellular location">
    <subcellularLocation>
        <location evidence="1">Nucleus</location>
    </subcellularLocation>
    <subcellularLocation>
        <location evidence="1">Cytoplasm</location>
    </subcellularLocation>
</comment>
<comment type="PTM">
    <text evidence="1">Phosphorylated on serine residues. Phosphorylated upon induction by RA or at high calcium concentrations (By similarity).</text>
</comment>
<dbReference type="EMBL" id="AB169851">
    <property type="protein sequence ID" value="BAE01932.1"/>
    <property type="molecule type" value="mRNA"/>
</dbReference>
<dbReference type="RefSeq" id="XP_005540108.1">
    <property type="nucleotide sequence ID" value="XM_005540051.4"/>
</dbReference>
<dbReference type="BMRB" id="Q4R4P3"/>
<dbReference type="SMR" id="Q4R4P3"/>
<dbReference type="STRING" id="9541.ENSMFAP00000045869"/>
<dbReference type="Ensembl" id="ENSMFAT00000074168.1">
    <property type="protein sequence ID" value="ENSMFAP00000052292.1"/>
    <property type="gene ID" value="ENSMFAG00000000624.2"/>
</dbReference>
<dbReference type="GeneID" id="101867292"/>
<dbReference type="KEGG" id="mcf:101867292"/>
<dbReference type="CTD" id="27101"/>
<dbReference type="VEuPathDB" id="HostDB:ENSMFAG00000000624"/>
<dbReference type="eggNOG" id="KOG3260">
    <property type="taxonomic scope" value="Eukaryota"/>
</dbReference>
<dbReference type="GeneTree" id="ENSGT00390000016470"/>
<dbReference type="OMA" id="YGWDQSA"/>
<dbReference type="Proteomes" id="UP000233100">
    <property type="component" value="Chromosome 1"/>
</dbReference>
<dbReference type="Bgee" id="ENSMFAG00000000624">
    <property type="expression patterns" value="Expressed in temporal lobe and 13 other cell types or tissues"/>
</dbReference>
<dbReference type="GO" id="GO:0005737">
    <property type="term" value="C:cytoplasm"/>
    <property type="evidence" value="ECO:0007669"/>
    <property type="project" value="UniProtKB-SubCell"/>
</dbReference>
<dbReference type="GO" id="GO:0005634">
    <property type="term" value="C:nucleus"/>
    <property type="evidence" value="ECO:0007669"/>
    <property type="project" value="UniProtKB-SubCell"/>
</dbReference>
<dbReference type="GO" id="GO:0044548">
    <property type="term" value="F:S100 protein binding"/>
    <property type="evidence" value="ECO:0007669"/>
    <property type="project" value="InterPro"/>
</dbReference>
<dbReference type="GO" id="GO:0015631">
    <property type="term" value="F:tubulin binding"/>
    <property type="evidence" value="ECO:0007669"/>
    <property type="project" value="InterPro"/>
</dbReference>
<dbReference type="GO" id="GO:0031625">
    <property type="term" value="F:ubiquitin protein ligase binding"/>
    <property type="evidence" value="ECO:0007669"/>
    <property type="project" value="InterPro"/>
</dbReference>
<dbReference type="GO" id="GO:0007507">
    <property type="term" value="P:heart development"/>
    <property type="evidence" value="ECO:0007669"/>
    <property type="project" value="TreeGrafter"/>
</dbReference>
<dbReference type="CDD" id="cd06468">
    <property type="entry name" value="p23_CacyBP"/>
    <property type="match status" value="1"/>
</dbReference>
<dbReference type="FunFam" id="2.60.40.790:FF:000006">
    <property type="entry name" value="calcyclin-binding protein-like"/>
    <property type="match status" value="1"/>
</dbReference>
<dbReference type="FunFam" id="4.10.860.10:FF:000006">
    <property type="entry name" value="calcyclin-binding protein-like"/>
    <property type="match status" value="1"/>
</dbReference>
<dbReference type="Gene3D" id="2.60.40.790">
    <property type="match status" value="1"/>
</dbReference>
<dbReference type="Gene3D" id="4.10.860.10">
    <property type="entry name" value="UVR domain"/>
    <property type="match status" value="1"/>
</dbReference>
<dbReference type="InterPro" id="IPR037201">
    <property type="entry name" value="CacyBP_N"/>
</dbReference>
<dbReference type="InterPro" id="IPR052289">
    <property type="entry name" value="Calcyclin-binding_UBL-bridge"/>
</dbReference>
<dbReference type="InterPro" id="IPR037893">
    <property type="entry name" value="CS_CacyBP"/>
</dbReference>
<dbReference type="InterPro" id="IPR007052">
    <property type="entry name" value="CS_dom"/>
</dbReference>
<dbReference type="InterPro" id="IPR008978">
    <property type="entry name" value="HSP20-like_chaperone"/>
</dbReference>
<dbReference type="InterPro" id="IPR007699">
    <property type="entry name" value="SGS_dom"/>
</dbReference>
<dbReference type="InterPro" id="IPR015120">
    <property type="entry name" value="Siah-Interact_N"/>
</dbReference>
<dbReference type="PANTHER" id="PTHR13164:SF3">
    <property type="entry name" value="CALCYCLIN-BINDING PROTEIN"/>
    <property type="match status" value="1"/>
</dbReference>
<dbReference type="PANTHER" id="PTHR13164">
    <property type="entry name" value="CALICYLIN BINDING PROTEIN"/>
    <property type="match status" value="1"/>
</dbReference>
<dbReference type="Pfam" id="PF04969">
    <property type="entry name" value="CS"/>
    <property type="match status" value="1"/>
</dbReference>
<dbReference type="Pfam" id="PF05002">
    <property type="entry name" value="SGS"/>
    <property type="match status" value="1"/>
</dbReference>
<dbReference type="Pfam" id="PF09032">
    <property type="entry name" value="Siah-Interact_N"/>
    <property type="match status" value="1"/>
</dbReference>
<dbReference type="SUPFAM" id="SSF140106">
    <property type="entry name" value="Calcyclin-binding protein-like"/>
    <property type="match status" value="1"/>
</dbReference>
<dbReference type="SUPFAM" id="SSF49764">
    <property type="entry name" value="HSP20-like chaperones"/>
    <property type="match status" value="1"/>
</dbReference>
<dbReference type="PROSITE" id="PS51203">
    <property type="entry name" value="CS"/>
    <property type="match status" value="1"/>
</dbReference>
<dbReference type="PROSITE" id="PS51048">
    <property type="entry name" value="SGS"/>
    <property type="match status" value="1"/>
</dbReference>
<feature type="initiator methionine" description="Removed" evidence="2">
    <location>
        <position position="1"/>
    </location>
</feature>
<feature type="chain" id="PRO_0000271390" description="Calcyclin-binding protein">
    <location>
        <begin position="2"/>
        <end position="228"/>
    </location>
</feature>
<feature type="domain" description="CS" evidence="4">
    <location>
        <begin position="73"/>
        <end position="167"/>
    </location>
</feature>
<feature type="domain" description="SGS" evidence="3">
    <location>
        <begin position="168"/>
        <end position="228"/>
    </location>
</feature>
<feature type="region of interest" description="Interaction with SIAH1" evidence="1">
    <location>
        <begin position="2"/>
        <end position="80"/>
    </location>
</feature>
<feature type="region of interest" description="Interaction with SKP1" evidence="1">
    <location>
        <begin position="73"/>
        <end position="228"/>
    </location>
</feature>
<feature type="region of interest" description="Interaction with S100A6" evidence="1">
    <location>
        <begin position="154"/>
        <end position="228"/>
    </location>
</feature>
<feature type="modified residue" description="N-acetylalanine" evidence="2">
    <location>
        <position position="2"/>
    </location>
</feature>
<feature type="modified residue" description="Phosphoserine" evidence="2">
    <location>
        <position position="3"/>
    </location>
</feature>
<feature type="modified residue" description="N6-acetyllysine" evidence="2">
    <location>
        <position position="8"/>
    </location>
</feature>
<feature type="modified residue" description="N6-acetyllysine" evidence="2">
    <location>
        <position position="19"/>
    </location>
</feature>
<feature type="modified residue" description="Phosphoserine" evidence="2">
    <location>
        <position position="34"/>
    </location>
</feature>
<feature type="modified residue" description="N6-acetyllysine" evidence="2">
    <location>
        <position position="85"/>
    </location>
</feature>
<feature type="modified residue" description="N6-acetyllysine" evidence="2">
    <location>
        <position position="118"/>
    </location>
</feature>
<sequence>MASEELQKDLEEVKVLLEKATRKRVRDALTAEKSKIETEIKNKMQQKSQKKAELLDNEKPAAVVAPITTGYTVKISNYGWDQSDKFVKIYITLSGVHQVPTENVQVHFTERSFDLLVKNLNGKSYSMIVNNLLKPISVEGSSKKVKTDTVLILCRKKVENTRWDYLTQVEKECKEKEKPSYDTETDPSEGLMNVLKKIYEDGDDDMKRTINKAWVESREKQAKGDTEF</sequence>
<organism>
    <name type="scientific">Macaca fascicularis</name>
    <name type="common">Crab-eating macaque</name>
    <name type="synonym">Cynomolgus monkey</name>
    <dbReference type="NCBI Taxonomy" id="9541"/>
    <lineage>
        <taxon>Eukaryota</taxon>
        <taxon>Metazoa</taxon>
        <taxon>Chordata</taxon>
        <taxon>Craniata</taxon>
        <taxon>Vertebrata</taxon>
        <taxon>Euteleostomi</taxon>
        <taxon>Mammalia</taxon>
        <taxon>Eutheria</taxon>
        <taxon>Euarchontoglires</taxon>
        <taxon>Primates</taxon>
        <taxon>Haplorrhini</taxon>
        <taxon>Catarrhini</taxon>
        <taxon>Cercopithecidae</taxon>
        <taxon>Cercopithecinae</taxon>
        <taxon>Macaca</taxon>
    </lineage>
</organism>
<reference key="1">
    <citation type="submission" date="2005-06" db="EMBL/GenBank/DDBJ databases">
        <title>DNA sequences of macaque genes expressed in brain or testis and its evolutionary implications.</title>
        <authorList>
            <consortium name="International consortium for macaque cDNA sequencing and analysis"/>
        </authorList>
    </citation>
    <scope>NUCLEOTIDE SEQUENCE [LARGE SCALE MRNA]</scope>
    <source>
        <tissue>Temporal cortex</tissue>
    </source>
</reference>
<evidence type="ECO:0000250" key="1"/>
<evidence type="ECO:0000250" key="2">
    <source>
        <dbReference type="UniProtKB" id="Q9HB71"/>
    </source>
</evidence>
<evidence type="ECO:0000255" key="3">
    <source>
        <dbReference type="PROSITE-ProRule" id="PRU00386"/>
    </source>
</evidence>
<evidence type="ECO:0000255" key="4">
    <source>
        <dbReference type="PROSITE-ProRule" id="PRU00547"/>
    </source>
</evidence>
<accession>Q4R4P3</accession>
<keyword id="KW-0007">Acetylation</keyword>
<keyword id="KW-0963">Cytoplasm</keyword>
<keyword id="KW-0539">Nucleus</keyword>
<keyword id="KW-0597">Phosphoprotein</keyword>
<keyword id="KW-1185">Reference proteome</keyword>
<keyword id="KW-0833">Ubl conjugation pathway</keyword>
<proteinExistence type="evidence at transcript level"/>
<protein>
    <recommendedName>
        <fullName>Calcyclin-binding protein</fullName>
        <shortName>CacyBP</shortName>
    </recommendedName>
</protein>
<name>CYBP_MACFA</name>